<dbReference type="EMBL" id="CP001407">
    <property type="protein sequence ID" value="ACO29423.1"/>
    <property type="molecule type" value="Genomic_DNA"/>
</dbReference>
<dbReference type="RefSeq" id="WP_000464508.1">
    <property type="nucleotide sequence ID" value="NZ_CP009318.1"/>
</dbReference>
<dbReference type="SMR" id="C1ESW5"/>
<dbReference type="GeneID" id="93006680"/>
<dbReference type="KEGG" id="bcx:BCA_4532"/>
<dbReference type="PATRIC" id="fig|572264.18.peg.4481"/>
<dbReference type="Proteomes" id="UP000002210">
    <property type="component" value="Chromosome"/>
</dbReference>
<dbReference type="GO" id="GO:0005737">
    <property type="term" value="C:cytoplasm"/>
    <property type="evidence" value="ECO:0007669"/>
    <property type="project" value="UniProtKB-SubCell"/>
</dbReference>
<dbReference type="GO" id="GO:0009379">
    <property type="term" value="C:Holliday junction helicase complex"/>
    <property type="evidence" value="ECO:0007669"/>
    <property type="project" value="InterPro"/>
</dbReference>
<dbReference type="GO" id="GO:0048476">
    <property type="term" value="C:Holliday junction resolvase complex"/>
    <property type="evidence" value="ECO:0007669"/>
    <property type="project" value="UniProtKB-UniRule"/>
</dbReference>
<dbReference type="GO" id="GO:0005524">
    <property type="term" value="F:ATP binding"/>
    <property type="evidence" value="ECO:0007669"/>
    <property type="project" value="InterPro"/>
</dbReference>
<dbReference type="GO" id="GO:0000400">
    <property type="term" value="F:four-way junction DNA binding"/>
    <property type="evidence" value="ECO:0007669"/>
    <property type="project" value="UniProtKB-UniRule"/>
</dbReference>
<dbReference type="GO" id="GO:0009378">
    <property type="term" value="F:four-way junction helicase activity"/>
    <property type="evidence" value="ECO:0007669"/>
    <property type="project" value="InterPro"/>
</dbReference>
<dbReference type="GO" id="GO:0006310">
    <property type="term" value="P:DNA recombination"/>
    <property type="evidence" value="ECO:0007669"/>
    <property type="project" value="UniProtKB-UniRule"/>
</dbReference>
<dbReference type="GO" id="GO:0006281">
    <property type="term" value="P:DNA repair"/>
    <property type="evidence" value="ECO:0007669"/>
    <property type="project" value="UniProtKB-UniRule"/>
</dbReference>
<dbReference type="CDD" id="cd14332">
    <property type="entry name" value="UBA_RuvA_C"/>
    <property type="match status" value="1"/>
</dbReference>
<dbReference type="Gene3D" id="1.10.150.20">
    <property type="entry name" value="5' to 3' exonuclease, C-terminal subdomain"/>
    <property type="match status" value="1"/>
</dbReference>
<dbReference type="Gene3D" id="1.10.8.10">
    <property type="entry name" value="DNA helicase RuvA subunit, C-terminal domain"/>
    <property type="match status" value="1"/>
</dbReference>
<dbReference type="Gene3D" id="2.40.50.140">
    <property type="entry name" value="Nucleic acid-binding proteins"/>
    <property type="match status" value="1"/>
</dbReference>
<dbReference type="HAMAP" id="MF_00031">
    <property type="entry name" value="DNA_HJ_migration_RuvA"/>
    <property type="match status" value="1"/>
</dbReference>
<dbReference type="InterPro" id="IPR013849">
    <property type="entry name" value="DNA_helicase_Holl-junc_RuvA_I"/>
</dbReference>
<dbReference type="InterPro" id="IPR003583">
    <property type="entry name" value="Hlx-hairpin-Hlx_DNA-bd_motif"/>
</dbReference>
<dbReference type="InterPro" id="IPR012340">
    <property type="entry name" value="NA-bd_OB-fold"/>
</dbReference>
<dbReference type="InterPro" id="IPR000085">
    <property type="entry name" value="RuvA"/>
</dbReference>
<dbReference type="InterPro" id="IPR010994">
    <property type="entry name" value="RuvA_2-like"/>
</dbReference>
<dbReference type="InterPro" id="IPR011114">
    <property type="entry name" value="RuvA_C"/>
</dbReference>
<dbReference type="InterPro" id="IPR036267">
    <property type="entry name" value="RuvA_C_sf"/>
</dbReference>
<dbReference type="NCBIfam" id="TIGR00084">
    <property type="entry name" value="ruvA"/>
    <property type="match status" value="1"/>
</dbReference>
<dbReference type="Pfam" id="PF14520">
    <property type="entry name" value="HHH_5"/>
    <property type="match status" value="1"/>
</dbReference>
<dbReference type="Pfam" id="PF07499">
    <property type="entry name" value="RuvA_C"/>
    <property type="match status" value="1"/>
</dbReference>
<dbReference type="Pfam" id="PF01330">
    <property type="entry name" value="RuvA_N"/>
    <property type="match status" value="1"/>
</dbReference>
<dbReference type="SMART" id="SM00278">
    <property type="entry name" value="HhH1"/>
    <property type="match status" value="2"/>
</dbReference>
<dbReference type="SUPFAM" id="SSF46929">
    <property type="entry name" value="DNA helicase RuvA subunit, C-terminal domain"/>
    <property type="match status" value="1"/>
</dbReference>
<dbReference type="SUPFAM" id="SSF50249">
    <property type="entry name" value="Nucleic acid-binding proteins"/>
    <property type="match status" value="1"/>
</dbReference>
<dbReference type="SUPFAM" id="SSF47781">
    <property type="entry name" value="RuvA domain 2-like"/>
    <property type="match status" value="1"/>
</dbReference>
<keyword id="KW-0963">Cytoplasm</keyword>
<keyword id="KW-0227">DNA damage</keyword>
<keyword id="KW-0233">DNA recombination</keyword>
<keyword id="KW-0234">DNA repair</keyword>
<keyword id="KW-0238">DNA-binding</keyword>
<gene>
    <name evidence="1" type="primary">ruvA</name>
    <name type="ordered locus">BCA_4532</name>
</gene>
<accession>C1ESW5</accession>
<feature type="chain" id="PRO_1000195115" description="Holliday junction branch migration complex subunit RuvA">
    <location>
        <begin position="1"/>
        <end position="205"/>
    </location>
</feature>
<feature type="region of interest" description="Domain I" evidence="1">
    <location>
        <begin position="1"/>
        <end position="62"/>
    </location>
</feature>
<feature type="region of interest" description="Domain II" evidence="1">
    <location>
        <begin position="63"/>
        <end position="141"/>
    </location>
</feature>
<feature type="region of interest" description="Flexible linker" evidence="1">
    <location>
        <begin position="142"/>
        <end position="152"/>
    </location>
</feature>
<feature type="region of interest" description="Domain III" evidence="1">
    <location>
        <begin position="153"/>
        <end position="205"/>
    </location>
</feature>
<name>RUVA_BACC3</name>
<organism>
    <name type="scientific">Bacillus cereus (strain 03BB102)</name>
    <dbReference type="NCBI Taxonomy" id="572264"/>
    <lineage>
        <taxon>Bacteria</taxon>
        <taxon>Bacillati</taxon>
        <taxon>Bacillota</taxon>
        <taxon>Bacilli</taxon>
        <taxon>Bacillales</taxon>
        <taxon>Bacillaceae</taxon>
        <taxon>Bacillus</taxon>
        <taxon>Bacillus cereus group</taxon>
    </lineage>
</organism>
<proteinExistence type="inferred from homology"/>
<protein>
    <recommendedName>
        <fullName evidence="1">Holliday junction branch migration complex subunit RuvA</fullName>
    </recommendedName>
</protein>
<evidence type="ECO:0000255" key="1">
    <source>
        <dbReference type="HAMAP-Rule" id="MF_00031"/>
    </source>
</evidence>
<sequence length="205" mass="23194">MFEYVTGYVEYVGPEYVVIDHNGIGYQIFTPNPYVFQRSKQEIRVYTYHYVREDIMALYGFKTREERLLFTKLLGVSGIGPKGALAILASGQTGQVVQAIEHEDEKFLVKFPGVGKKTARQMILDLKGKLADVVPDAFVDLFSDEERFDEKKGSSAELDEALEALRALGYAEREVSRVVPELLKESLTTDQYIKKALSLLLNGKR</sequence>
<reference key="1">
    <citation type="submission" date="2009-02" db="EMBL/GenBank/DDBJ databases">
        <title>Genome sequence of Bacillus cereus 03BB102.</title>
        <authorList>
            <person name="Dodson R.J."/>
            <person name="Jackson P."/>
            <person name="Munk A.C."/>
            <person name="Brettin T."/>
            <person name="Bruce D."/>
            <person name="Detter C."/>
            <person name="Tapia R."/>
            <person name="Han C."/>
            <person name="Sutton G."/>
            <person name="Sims D."/>
        </authorList>
    </citation>
    <scope>NUCLEOTIDE SEQUENCE [LARGE SCALE GENOMIC DNA]</scope>
    <source>
        <strain>03BB102</strain>
    </source>
</reference>
<comment type="function">
    <text evidence="1">The RuvA-RuvB-RuvC complex processes Holliday junction (HJ) DNA during genetic recombination and DNA repair, while the RuvA-RuvB complex plays an important role in the rescue of blocked DNA replication forks via replication fork reversal (RFR). RuvA specifically binds to HJ cruciform DNA, conferring on it an open structure. The RuvB hexamer acts as an ATP-dependent pump, pulling dsDNA into and through the RuvAB complex. HJ branch migration allows RuvC to scan DNA until it finds its consensus sequence, where it cleaves and resolves the cruciform DNA.</text>
</comment>
<comment type="subunit">
    <text evidence="1">Homotetramer. Forms an RuvA(8)-RuvB(12)-Holliday junction (HJ) complex. HJ DNA is sandwiched between 2 RuvA tetramers; dsDNA enters through RuvA and exits via RuvB. An RuvB hexamer assembles on each DNA strand where it exits the tetramer. Each RuvB hexamer is contacted by two RuvA subunits (via domain III) on 2 adjacent RuvB subunits; this complex drives branch migration. In the full resolvosome a probable DNA-RuvA(4)-RuvB(12)-RuvC(2) complex forms which resolves the HJ.</text>
</comment>
<comment type="subcellular location">
    <subcellularLocation>
        <location evidence="1">Cytoplasm</location>
    </subcellularLocation>
</comment>
<comment type="domain">
    <text evidence="1">Has three domains with a flexible linker between the domains II and III and assumes an 'L' shape. Domain III is highly mobile and contacts RuvB.</text>
</comment>
<comment type="similarity">
    <text evidence="1">Belongs to the RuvA family.</text>
</comment>